<name>SEC13_DROME</name>
<feature type="chain" id="PRO_0000439657" description="Protein SEC13 homolog" evidence="8">
    <location>
        <begin position="1"/>
        <end position="356"/>
    </location>
</feature>
<feature type="repeat" description="WD 1" evidence="2">
    <location>
        <begin position="11"/>
        <end position="50"/>
    </location>
</feature>
<feature type="repeat" description="WD 2" evidence="2">
    <location>
        <begin position="54"/>
        <end position="95"/>
    </location>
</feature>
<feature type="repeat" description="WD 3" evidence="2">
    <location>
        <begin position="101"/>
        <end position="142"/>
    </location>
</feature>
<feature type="repeat" description="WD 4" evidence="2">
    <location>
        <begin position="149"/>
        <end position="205"/>
    </location>
</feature>
<feature type="repeat" description="WD 5" evidence="2">
    <location>
        <begin position="210"/>
        <end position="253"/>
    </location>
</feature>
<feature type="repeat" description="WD 6" evidence="2">
    <location>
        <begin position="259"/>
        <end position="298"/>
    </location>
</feature>
<feature type="region of interest" description="Disordered" evidence="3">
    <location>
        <begin position="307"/>
        <end position="356"/>
    </location>
</feature>
<feature type="compositionally biased region" description="Low complexity" evidence="3">
    <location>
        <begin position="308"/>
        <end position="356"/>
    </location>
</feature>
<evidence type="ECO:0000250" key="1">
    <source>
        <dbReference type="UniProtKB" id="P55735"/>
    </source>
</evidence>
<evidence type="ECO:0000255" key="2"/>
<evidence type="ECO:0000256" key="3">
    <source>
        <dbReference type="SAM" id="MobiDB-lite"/>
    </source>
</evidence>
<evidence type="ECO:0000269" key="4">
    <source>
    </source>
</evidence>
<evidence type="ECO:0000269" key="5">
    <source>
    </source>
</evidence>
<evidence type="ECO:0000269" key="6">
    <source>
    </source>
</evidence>
<evidence type="ECO:0000269" key="7">
    <source>
    </source>
</evidence>
<evidence type="ECO:0000305" key="8"/>
<evidence type="ECO:0000305" key="9">
    <source>
    </source>
</evidence>
<evidence type="ECO:0000312" key="10">
    <source>
        <dbReference type="EMBL" id="AAD46849.2"/>
    </source>
</evidence>
<evidence type="ECO:0000312" key="11">
    <source>
        <dbReference type="EMBL" id="AEO27697.1"/>
    </source>
</evidence>
<evidence type="ECO:0000312" key="12">
    <source>
        <dbReference type="FlyBase" id="FBgn0024509"/>
    </source>
</evidence>
<evidence type="ECO:0000312" key="13">
    <source>
        <dbReference type="Proteomes" id="UP000000803"/>
    </source>
</evidence>
<dbReference type="EMBL" id="JN600259">
    <property type="protein sequence ID" value="AEO27697.1"/>
    <property type="molecule type" value="Genomic_DNA"/>
</dbReference>
<dbReference type="EMBL" id="AE014297">
    <property type="protein sequence ID" value="AAF56128.1"/>
    <property type="molecule type" value="Genomic_DNA"/>
</dbReference>
<dbReference type="EMBL" id="AE014297">
    <property type="protein sequence ID" value="AHN57479.1"/>
    <property type="molecule type" value="Genomic_DNA"/>
</dbReference>
<dbReference type="EMBL" id="AF160909">
    <property type="protein sequence ID" value="AAD46849.2"/>
    <property type="status" value="ALT_INIT"/>
    <property type="molecule type" value="mRNA"/>
</dbReference>
<dbReference type="RefSeq" id="NP_001287480.1">
    <property type="nucleotide sequence ID" value="NM_001300551.1"/>
</dbReference>
<dbReference type="RefSeq" id="NP_651977.1">
    <property type="nucleotide sequence ID" value="NM_143720.4"/>
</dbReference>
<dbReference type="SMR" id="Q9V3J4"/>
<dbReference type="ComplexPortal" id="CPX-2400">
    <property type="entry name" value="COPII vesicle coat complex"/>
</dbReference>
<dbReference type="ComplexPortal" id="CPX-2568">
    <property type="entry name" value="Nuclear pore complex"/>
</dbReference>
<dbReference type="ComplexPortal" id="CPX-2664">
    <property type="entry name" value="GATOR2 complex"/>
</dbReference>
<dbReference type="FunCoup" id="Q9V3J4">
    <property type="interactions" value="2307"/>
</dbReference>
<dbReference type="IntAct" id="Q9V3J4">
    <property type="interactions" value="16"/>
</dbReference>
<dbReference type="STRING" id="7227.FBpp0311988"/>
<dbReference type="PaxDb" id="7227-FBpp0083801"/>
<dbReference type="DNASU" id="44437"/>
<dbReference type="EnsemblMetazoa" id="FBtr0084409">
    <property type="protein sequence ID" value="FBpp0083801"/>
    <property type="gene ID" value="FBgn0024509"/>
</dbReference>
<dbReference type="EnsemblMetazoa" id="FBtr0346160">
    <property type="protein sequence ID" value="FBpp0311988"/>
    <property type="gene ID" value="FBgn0024509"/>
</dbReference>
<dbReference type="GeneID" id="44437"/>
<dbReference type="KEGG" id="dme:Dmel_CG6773"/>
<dbReference type="UCSC" id="CG6773-RA">
    <property type="organism name" value="d. melanogaster"/>
</dbReference>
<dbReference type="AGR" id="FB:FBgn0024509"/>
<dbReference type="CTD" id="6396"/>
<dbReference type="FlyBase" id="FBgn0024509">
    <property type="gene designation" value="Sec13"/>
</dbReference>
<dbReference type="VEuPathDB" id="VectorBase:FBgn0024509"/>
<dbReference type="eggNOG" id="KOG1332">
    <property type="taxonomic scope" value="Eukaryota"/>
</dbReference>
<dbReference type="GeneTree" id="ENSGT00940000153393"/>
<dbReference type="HOGENOM" id="CLU_032441_0_1_1"/>
<dbReference type="InParanoid" id="Q9V3J4"/>
<dbReference type="OMA" id="IWKEEGD"/>
<dbReference type="OrthoDB" id="364224at2759"/>
<dbReference type="PhylomeDB" id="Q9V3J4"/>
<dbReference type="Reactome" id="R-DME-159227">
    <property type="pathway name" value="Transport of the SLBP independent Mature mRNA"/>
</dbReference>
<dbReference type="Reactome" id="R-DME-159230">
    <property type="pathway name" value="Transport of the SLBP Dependant Mature mRNA"/>
</dbReference>
<dbReference type="Reactome" id="R-DME-159231">
    <property type="pathway name" value="Transport of Mature mRNA Derived from an Intronless Transcript"/>
</dbReference>
<dbReference type="Reactome" id="R-DME-159236">
    <property type="pathway name" value="Transport of Mature mRNA derived from an Intron-Containing Transcript"/>
</dbReference>
<dbReference type="Reactome" id="R-DME-204005">
    <property type="pathway name" value="COPII-mediated vesicle transport"/>
</dbReference>
<dbReference type="Reactome" id="R-DME-3108214">
    <property type="pathway name" value="SUMOylation of DNA damage response and repair proteins"/>
</dbReference>
<dbReference type="Reactome" id="R-DME-3301854">
    <property type="pathway name" value="Nuclear Pore Complex (NPC) Disassembly"/>
</dbReference>
<dbReference type="Reactome" id="R-DME-4085377">
    <property type="pathway name" value="SUMOylation of SUMOylation proteins"/>
</dbReference>
<dbReference type="Reactome" id="R-DME-4551638">
    <property type="pathway name" value="SUMOylation of chromatin organization proteins"/>
</dbReference>
<dbReference type="Reactome" id="R-DME-5578749">
    <property type="pathway name" value="Transcriptional regulation by small RNAs"/>
</dbReference>
<dbReference type="Reactome" id="R-DME-9615933">
    <property type="pathway name" value="Postmitotic nuclear pore complex (NPC) reformation"/>
</dbReference>
<dbReference type="SignaLink" id="Q9V3J4"/>
<dbReference type="BioGRID-ORCS" id="44437">
    <property type="hits" value="0 hits in 1 CRISPR screen"/>
</dbReference>
<dbReference type="GenomeRNAi" id="44437"/>
<dbReference type="PRO" id="PR:Q9V3J4"/>
<dbReference type="Proteomes" id="UP000000803">
    <property type="component" value="Chromosome 3R"/>
</dbReference>
<dbReference type="Bgee" id="FBgn0024509">
    <property type="expression patterns" value="Expressed in spermatid in male reproductive gland and 172 other cell types or tissues"/>
</dbReference>
<dbReference type="GO" id="GO:0005813">
    <property type="term" value="C:centrosome"/>
    <property type="evidence" value="ECO:0007669"/>
    <property type="project" value="UniProtKB-SubCell"/>
</dbReference>
<dbReference type="GO" id="GO:0000785">
    <property type="term" value="C:chromatin"/>
    <property type="evidence" value="ECO:0000314"/>
    <property type="project" value="UniProtKB"/>
</dbReference>
<dbReference type="GO" id="GO:0030127">
    <property type="term" value="C:COPII vesicle coat"/>
    <property type="evidence" value="ECO:0000250"/>
    <property type="project" value="FlyBase"/>
</dbReference>
<dbReference type="GO" id="GO:0005789">
    <property type="term" value="C:endoplasmic reticulum membrane"/>
    <property type="evidence" value="ECO:0007669"/>
    <property type="project" value="UniProtKB-SubCell"/>
</dbReference>
<dbReference type="GO" id="GO:0061700">
    <property type="term" value="C:GATOR2 complex"/>
    <property type="evidence" value="ECO:0000304"/>
    <property type="project" value="FlyBase"/>
</dbReference>
<dbReference type="GO" id="GO:0005765">
    <property type="term" value="C:lysosomal membrane"/>
    <property type="evidence" value="ECO:0007669"/>
    <property type="project" value="UniProtKB-SubCell"/>
</dbReference>
<dbReference type="GO" id="GO:0031080">
    <property type="term" value="C:nuclear pore outer ring"/>
    <property type="evidence" value="ECO:0000250"/>
    <property type="project" value="FlyBase"/>
</dbReference>
<dbReference type="GO" id="GO:0005654">
    <property type="term" value="C:nucleoplasm"/>
    <property type="evidence" value="ECO:0000314"/>
    <property type="project" value="UniProtKB"/>
</dbReference>
<dbReference type="GO" id="GO:0005703">
    <property type="term" value="C:polytene chromosome puff"/>
    <property type="evidence" value="ECO:0000314"/>
    <property type="project" value="UniProtKB"/>
</dbReference>
<dbReference type="GO" id="GO:0035859">
    <property type="term" value="C:Seh1-associated complex"/>
    <property type="evidence" value="ECO:0000314"/>
    <property type="project" value="FlyBase"/>
</dbReference>
<dbReference type="GO" id="GO:0003682">
    <property type="term" value="F:chromatin binding"/>
    <property type="evidence" value="ECO:0000314"/>
    <property type="project" value="UniProtKB"/>
</dbReference>
<dbReference type="GO" id="GO:0005198">
    <property type="term" value="F:structural molecule activity"/>
    <property type="evidence" value="ECO:0000250"/>
    <property type="project" value="FlyBase"/>
</dbReference>
<dbReference type="GO" id="GO:0034605">
    <property type="term" value="P:cellular response to heat"/>
    <property type="evidence" value="ECO:0000315"/>
    <property type="project" value="UniProtKB"/>
</dbReference>
<dbReference type="GO" id="GO:0035293">
    <property type="term" value="P:chitin-based larval cuticle pattern formation"/>
    <property type="evidence" value="ECO:0000315"/>
    <property type="project" value="FlyBase"/>
</dbReference>
<dbReference type="GO" id="GO:0090114">
    <property type="term" value="P:COPII-coated vesicle budding"/>
    <property type="evidence" value="ECO:0000250"/>
    <property type="project" value="FlyBase"/>
</dbReference>
<dbReference type="GO" id="GO:0035077">
    <property type="term" value="P:ecdysone-mediated polytene chromosome puffing"/>
    <property type="evidence" value="ECO:0000314"/>
    <property type="project" value="UniProtKB"/>
</dbReference>
<dbReference type="GO" id="GO:0008363">
    <property type="term" value="P:larval chitin-based cuticle development"/>
    <property type="evidence" value="ECO:0000315"/>
    <property type="project" value="FlyBase"/>
</dbReference>
<dbReference type="GO" id="GO:0051028">
    <property type="term" value="P:mRNA transport"/>
    <property type="evidence" value="ECO:0007669"/>
    <property type="project" value="UniProtKB-KW"/>
</dbReference>
<dbReference type="GO" id="GO:0032008">
    <property type="term" value="P:positive regulation of TOR signaling"/>
    <property type="evidence" value="ECO:0000318"/>
    <property type="project" value="GO_Central"/>
</dbReference>
<dbReference type="GO" id="GO:0045944">
    <property type="term" value="P:positive regulation of transcription by RNA polymerase II"/>
    <property type="evidence" value="ECO:0000315"/>
    <property type="project" value="UniProtKB"/>
</dbReference>
<dbReference type="GO" id="GO:0060261">
    <property type="term" value="P:positive regulation of transcription initiation by RNA polymerase II"/>
    <property type="evidence" value="ECO:0000315"/>
    <property type="project" value="UniProtKB"/>
</dbReference>
<dbReference type="GO" id="GO:0032527">
    <property type="term" value="P:protein exit from endoplasmic reticulum"/>
    <property type="evidence" value="ECO:0000318"/>
    <property type="project" value="GO_Central"/>
</dbReference>
<dbReference type="GO" id="GO:0006606">
    <property type="term" value="P:protein import into nucleus"/>
    <property type="evidence" value="ECO:0000315"/>
    <property type="project" value="FlyBase"/>
</dbReference>
<dbReference type="FunFam" id="2.130.10.10:FF:000017">
    <property type="entry name" value="SEC13 homolog (S. cerevisiae)"/>
    <property type="match status" value="1"/>
</dbReference>
<dbReference type="Gene3D" id="2.130.10.10">
    <property type="entry name" value="YVTN repeat-like/Quinoprotein amine dehydrogenase"/>
    <property type="match status" value="1"/>
</dbReference>
<dbReference type="InterPro" id="IPR037363">
    <property type="entry name" value="Sec13/Seh1_fam"/>
</dbReference>
<dbReference type="InterPro" id="IPR015943">
    <property type="entry name" value="WD40/YVTN_repeat-like_dom_sf"/>
</dbReference>
<dbReference type="InterPro" id="IPR036322">
    <property type="entry name" value="WD40_repeat_dom_sf"/>
</dbReference>
<dbReference type="InterPro" id="IPR001680">
    <property type="entry name" value="WD40_rpt"/>
</dbReference>
<dbReference type="PANTHER" id="PTHR11024">
    <property type="entry name" value="NUCLEAR PORE COMPLEX PROTEIN SEC13 / SEH1 FAMILY MEMBER"/>
    <property type="match status" value="1"/>
</dbReference>
<dbReference type="PANTHER" id="PTHR11024:SF2">
    <property type="entry name" value="PROTEIN SEC13 HOMOLOG"/>
    <property type="match status" value="1"/>
</dbReference>
<dbReference type="Pfam" id="PF00400">
    <property type="entry name" value="WD40"/>
    <property type="match status" value="5"/>
</dbReference>
<dbReference type="SMART" id="SM00320">
    <property type="entry name" value="WD40"/>
    <property type="match status" value="6"/>
</dbReference>
<dbReference type="SUPFAM" id="SSF50978">
    <property type="entry name" value="WD40 repeat-like"/>
    <property type="match status" value="1"/>
</dbReference>
<dbReference type="PROSITE" id="PS50082">
    <property type="entry name" value="WD_REPEATS_2"/>
    <property type="match status" value="3"/>
</dbReference>
<dbReference type="PROSITE" id="PS50294">
    <property type="entry name" value="WD_REPEATS_REGION"/>
    <property type="match status" value="1"/>
</dbReference>
<reference evidence="11" key="1">
    <citation type="journal article" date="2012" name="Genesis">
        <title>DNApol-epsilon gene is indispensable for the survival and growth of Drosophila melanogaster.</title>
        <authorList>
            <person name="Verma A."/>
            <person name="Sengupta S."/>
            <person name="Lakhotia S.C."/>
        </authorList>
    </citation>
    <scope>NUCLEOTIDE SEQUENCE [GENOMIC DNA]</scope>
    <source>
        <strain evidence="11">Oregon-R</strain>
        <tissue evidence="11">Larva</tissue>
    </source>
</reference>
<reference evidence="13" key="2">
    <citation type="journal article" date="2000" name="Science">
        <title>The genome sequence of Drosophila melanogaster.</title>
        <authorList>
            <person name="Adams M.D."/>
            <person name="Celniker S.E."/>
            <person name="Holt R.A."/>
            <person name="Evans C.A."/>
            <person name="Gocayne J.D."/>
            <person name="Amanatides P.G."/>
            <person name="Scherer S.E."/>
            <person name="Li P.W."/>
            <person name="Hoskins R.A."/>
            <person name="Galle R.F."/>
            <person name="George R.A."/>
            <person name="Lewis S.E."/>
            <person name="Richards S."/>
            <person name="Ashburner M."/>
            <person name="Henderson S.N."/>
            <person name="Sutton G.G."/>
            <person name="Wortman J.R."/>
            <person name="Yandell M.D."/>
            <person name="Zhang Q."/>
            <person name="Chen L.X."/>
            <person name="Brandon R.C."/>
            <person name="Rogers Y.-H.C."/>
            <person name="Blazej R.G."/>
            <person name="Champe M."/>
            <person name="Pfeiffer B.D."/>
            <person name="Wan K.H."/>
            <person name="Doyle C."/>
            <person name="Baxter E.G."/>
            <person name="Helt G."/>
            <person name="Nelson C.R."/>
            <person name="Miklos G.L.G."/>
            <person name="Abril J.F."/>
            <person name="Agbayani A."/>
            <person name="An H.-J."/>
            <person name="Andrews-Pfannkoch C."/>
            <person name="Baldwin D."/>
            <person name="Ballew R.M."/>
            <person name="Basu A."/>
            <person name="Baxendale J."/>
            <person name="Bayraktaroglu L."/>
            <person name="Beasley E.M."/>
            <person name="Beeson K.Y."/>
            <person name="Benos P.V."/>
            <person name="Berman B.P."/>
            <person name="Bhandari D."/>
            <person name="Bolshakov S."/>
            <person name="Borkova D."/>
            <person name="Botchan M.R."/>
            <person name="Bouck J."/>
            <person name="Brokstein P."/>
            <person name="Brottier P."/>
            <person name="Burtis K.C."/>
            <person name="Busam D.A."/>
            <person name="Butler H."/>
            <person name="Cadieu E."/>
            <person name="Center A."/>
            <person name="Chandra I."/>
            <person name="Cherry J.M."/>
            <person name="Cawley S."/>
            <person name="Dahlke C."/>
            <person name="Davenport L.B."/>
            <person name="Davies P."/>
            <person name="de Pablos B."/>
            <person name="Delcher A."/>
            <person name="Deng Z."/>
            <person name="Mays A.D."/>
            <person name="Dew I."/>
            <person name="Dietz S.M."/>
            <person name="Dodson K."/>
            <person name="Doup L.E."/>
            <person name="Downes M."/>
            <person name="Dugan-Rocha S."/>
            <person name="Dunkov B.C."/>
            <person name="Dunn P."/>
            <person name="Durbin K.J."/>
            <person name="Evangelista C.C."/>
            <person name="Ferraz C."/>
            <person name="Ferriera S."/>
            <person name="Fleischmann W."/>
            <person name="Fosler C."/>
            <person name="Gabrielian A.E."/>
            <person name="Garg N.S."/>
            <person name="Gelbart W.M."/>
            <person name="Glasser K."/>
            <person name="Glodek A."/>
            <person name="Gong F."/>
            <person name="Gorrell J.H."/>
            <person name="Gu Z."/>
            <person name="Guan P."/>
            <person name="Harris M."/>
            <person name="Harris N.L."/>
            <person name="Harvey D.A."/>
            <person name="Heiman T.J."/>
            <person name="Hernandez J.R."/>
            <person name="Houck J."/>
            <person name="Hostin D."/>
            <person name="Houston K.A."/>
            <person name="Howland T.J."/>
            <person name="Wei M.-H."/>
            <person name="Ibegwam C."/>
            <person name="Jalali M."/>
            <person name="Kalush F."/>
            <person name="Karpen G.H."/>
            <person name="Ke Z."/>
            <person name="Kennison J.A."/>
            <person name="Ketchum K.A."/>
            <person name="Kimmel B.E."/>
            <person name="Kodira C.D."/>
            <person name="Kraft C.L."/>
            <person name="Kravitz S."/>
            <person name="Kulp D."/>
            <person name="Lai Z."/>
            <person name="Lasko P."/>
            <person name="Lei Y."/>
            <person name="Levitsky A.A."/>
            <person name="Li J.H."/>
            <person name="Li Z."/>
            <person name="Liang Y."/>
            <person name="Lin X."/>
            <person name="Liu X."/>
            <person name="Mattei B."/>
            <person name="McIntosh T.C."/>
            <person name="McLeod M.P."/>
            <person name="McPherson D."/>
            <person name="Merkulov G."/>
            <person name="Milshina N.V."/>
            <person name="Mobarry C."/>
            <person name="Morris J."/>
            <person name="Moshrefi A."/>
            <person name="Mount S.M."/>
            <person name="Moy M."/>
            <person name="Murphy B."/>
            <person name="Murphy L."/>
            <person name="Muzny D.M."/>
            <person name="Nelson D.L."/>
            <person name="Nelson D.R."/>
            <person name="Nelson K.A."/>
            <person name="Nixon K."/>
            <person name="Nusskern D.R."/>
            <person name="Pacleb J.M."/>
            <person name="Palazzolo M."/>
            <person name="Pittman G.S."/>
            <person name="Pan S."/>
            <person name="Pollard J."/>
            <person name="Puri V."/>
            <person name="Reese M.G."/>
            <person name="Reinert K."/>
            <person name="Remington K."/>
            <person name="Saunders R.D.C."/>
            <person name="Scheeler F."/>
            <person name="Shen H."/>
            <person name="Shue B.C."/>
            <person name="Siden-Kiamos I."/>
            <person name="Simpson M."/>
            <person name="Skupski M.P."/>
            <person name="Smith T.J."/>
            <person name="Spier E."/>
            <person name="Spradling A.C."/>
            <person name="Stapleton M."/>
            <person name="Strong R."/>
            <person name="Sun E."/>
            <person name="Svirskas R."/>
            <person name="Tector C."/>
            <person name="Turner R."/>
            <person name="Venter E."/>
            <person name="Wang A.H."/>
            <person name="Wang X."/>
            <person name="Wang Z.-Y."/>
            <person name="Wassarman D.A."/>
            <person name="Weinstock G.M."/>
            <person name="Weissenbach J."/>
            <person name="Williams S.M."/>
            <person name="Woodage T."/>
            <person name="Worley K.C."/>
            <person name="Wu D."/>
            <person name="Yang S."/>
            <person name="Yao Q.A."/>
            <person name="Ye J."/>
            <person name="Yeh R.-F."/>
            <person name="Zaveri J.S."/>
            <person name="Zhan M."/>
            <person name="Zhang G."/>
            <person name="Zhao Q."/>
            <person name="Zheng L."/>
            <person name="Zheng X.H."/>
            <person name="Zhong F.N."/>
            <person name="Zhong W."/>
            <person name="Zhou X."/>
            <person name="Zhu S.C."/>
            <person name="Zhu X."/>
            <person name="Smith H.O."/>
            <person name="Gibbs R.A."/>
            <person name="Myers E.W."/>
            <person name="Rubin G.M."/>
            <person name="Venter J.C."/>
        </authorList>
    </citation>
    <scope>NUCLEOTIDE SEQUENCE [LARGE SCALE GENOMIC DNA]</scope>
    <source>
        <strain evidence="13">Berkeley</strain>
    </source>
</reference>
<reference evidence="13" key="3">
    <citation type="journal article" date="2002" name="Genome Biol.">
        <title>Annotation of the Drosophila melanogaster euchromatic genome: a systematic review.</title>
        <authorList>
            <person name="Misra S."/>
            <person name="Crosby M.A."/>
            <person name="Mungall C.J."/>
            <person name="Matthews B.B."/>
            <person name="Campbell K.S."/>
            <person name="Hradecky P."/>
            <person name="Huang Y."/>
            <person name="Kaminker J.S."/>
            <person name="Millburn G.H."/>
            <person name="Prochnik S.E."/>
            <person name="Smith C.D."/>
            <person name="Tupy J.L."/>
            <person name="Whitfield E.J."/>
            <person name="Bayraktaroglu L."/>
            <person name="Berman B.P."/>
            <person name="Bettencourt B.R."/>
            <person name="Celniker S.E."/>
            <person name="de Grey A.D.N.J."/>
            <person name="Drysdale R.A."/>
            <person name="Harris N.L."/>
            <person name="Richter J."/>
            <person name="Russo S."/>
            <person name="Schroeder A.J."/>
            <person name="Shu S.Q."/>
            <person name="Stapleton M."/>
            <person name="Yamada C."/>
            <person name="Ashburner M."/>
            <person name="Gelbart W.M."/>
            <person name="Rubin G.M."/>
            <person name="Lewis S.E."/>
        </authorList>
    </citation>
    <scope>GENOME REANNOTATION</scope>
    <source>
        <strain evidence="13">Berkeley</strain>
    </source>
</reference>
<reference evidence="10" key="4">
    <citation type="journal article" date="2002" name="Genome Biol.">
        <title>A Drosophila full-length cDNA resource.</title>
        <authorList>
            <person name="Stapleton M."/>
            <person name="Carlson J.W."/>
            <person name="Brokstein P."/>
            <person name="Yu C."/>
            <person name="Champe M."/>
            <person name="George R.A."/>
            <person name="Guarin H."/>
            <person name="Kronmiller B."/>
            <person name="Pacleb J.M."/>
            <person name="Park S."/>
            <person name="Wan K.H."/>
            <person name="Rubin G.M."/>
            <person name="Celniker S.E."/>
        </authorList>
    </citation>
    <scope>NUCLEOTIDE SEQUENCE [LARGE SCALE MRNA]</scope>
    <source>
        <strain evidence="10">Berkeley</strain>
        <tissue evidence="10">Embryo</tissue>
    </source>
</reference>
<reference evidence="8" key="5">
    <citation type="journal article" date="2010" name="Cell">
        <title>Chromatin-bound nuclear pore components regulate gene expression in higher eukaryotes.</title>
        <authorList>
            <person name="Capelson M."/>
            <person name="Liang Y."/>
            <person name="Schulte R."/>
            <person name="Mair W."/>
            <person name="Wagner U."/>
            <person name="Hetzer M.W."/>
        </authorList>
    </citation>
    <scope>FUNCTION</scope>
    <scope>SUBCELLULAR LOCATION</scope>
    <scope>TISSUE SPECIFICITY</scope>
    <scope>DEVELOPMENTAL STAGE</scope>
    <scope>DISRUPTION PHENOTYPE</scope>
</reference>
<reference evidence="8" key="6">
    <citation type="journal article" date="2010" name="Mol. Cell. Biol.">
        <title>Specific nucleoporin requirement for Smad nuclear translocation.</title>
        <authorList>
            <person name="Chen X."/>
            <person name="Xu L."/>
        </authorList>
    </citation>
    <scope>FUNCTION</scope>
    <scope>INTERACTION WITH MAD AND MSK</scope>
</reference>
<reference evidence="8" key="7">
    <citation type="journal article" date="2016" name="PLoS Genet.">
        <title>The GATOR2 component Wdr24 regulates TORC1 activity and lysosome function.</title>
        <authorList>
            <person name="Cai W."/>
            <person name="Wei Y."/>
            <person name="Jarnik M."/>
            <person name="Reich J."/>
            <person name="Lilly M.A."/>
        </authorList>
    </citation>
    <scope>FUNCTION</scope>
    <scope>IDENTIFICATION IN THE GATOR COMPLEX</scope>
    <scope>INTERACTION WITH MSK AND MAD</scope>
    <scope>SUBCELLULAR LOCATION</scope>
</reference>
<reference key="8">
    <citation type="journal article" date="2024" name="Nat. Commun.">
        <title>An evolutionary mechanism to assimilate new nutrient sensors into the mTORC1 pathway.</title>
        <authorList>
            <person name="Liu G.Y."/>
            <person name="Jouandin P."/>
            <person name="Bahng R.E."/>
            <person name="Perrimon N."/>
            <person name="Sabatini D.M."/>
        </authorList>
    </citation>
    <scope>INTERACTION WITH UNMET</scope>
</reference>
<keyword id="KW-0963">Cytoplasm</keyword>
<keyword id="KW-0968">Cytoplasmic vesicle</keyword>
<keyword id="KW-0206">Cytoskeleton</keyword>
<keyword id="KW-0217">Developmental protein</keyword>
<keyword id="KW-0256">Endoplasmic reticulum</keyword>
<keyword id="KW-0458">Lysosome</keyword>
<keyword id="KW-0472">Membrane</keyword>
<keyword id="KW-0509">mRNA transport</keyword>
<keyword id="KW-0906">Nuclear pore complex</keyword>
<keyword id="KW-0539">Nucleus</keyword>
<keyword id="KW-0653">Protein transport</keyword>
<keyword id="KW-1185">Reference proteome</keyword>
<keyword id="KW-0677">Repeat</keyword>
<keyword id="KW-0804">Transcription</keyword>
<keyword id="KW-0805">Transcription regulation</keyword>
<keyword id="KW-0811">Translocation</keyword>
<keyword id="KW-0813">Transport</keyword>
<keyword id="KW-0853">WD repeat</keyword>
<gene>
    <name evidence="12" type="primary">Sec13</name>
    <name evidence="12" type="ORF">CG6773</name>
</gene>
<organism evidence="13">
    <name type="scientific">Drosophila melanogaster</name>
    <name type="common">Fruit fly</name>
    <dbReference type="NCBI Taxonomy" id="7227"/>
    <lineage>
        <taxon>Eukaryota</taxon>
        <taxon>Metazoa</taxon>
        <taxon>Ecdysozoa</taxon>
        <taxon>Arthropoda</taxon>
        <taxon>Hexapoda</taxon>
        <taxon>Insecta</taxon>
        <taxon>Pterygota</taxon>
        <taxon>Neoptera</taxon>
        <taxon>Endopterygota</taxon>
        <taxon>Diptera</taxon>
        <taxon>Brachycera</taxon>
        <taxon>Muscomorpha</taxon>
        <taxon>Ephydroidea</taxon>
        <taxon>Drosophilidae</taxon>
        <taxon>Drosophila</taxon>
        <taxon>Sophophora</taxon>
    </lineage>
</organism>
<accession>Q9V3J4</accession>
<accession>Q7KLW8</accession>
<sequence>MVSLLQEIDTEHEDMVHHAALDFYGLLLATCSSDGSVRIFHSRKNNKALAELKGHQGPVWQVAWAHPKFGNILASCSYDRKVIVWKSTTPRDWTKLYEYSNHDSSVNSVDFAPSEYGLVLACASSDGSVSVLTCNTEYGVWDAKKIPNAHTIGVNAISWCPAQAPDPAFDQRVTSRSAAVKRLVSGGCDNLVKIWREDNDRWVEEHRLEAHSDWVRDVAWAPSIGLPRSQIATASQDRHVIVWSSNADLSEWTSTVLHTFDDAVWSISWSTTGNILAVTGGDNNVTLWKENTEGQWIRINYESGTAIQSKQPSHLPHSHSQQQQALQQHQQQAPSHPGPSSDSEHSSNLSNSQLSN</sequence>
<comment type="function">
    <text evidence="1 4 5">Functions as a component of the nuclear pore complex (NPC) and the COPII coat (By similarity). At the endoplasmic reticulum, SEC13 is involved in the biogenesis of COPII-coated vesicles (By similarity). Recruited to transcriptionally active chromatin at the time of transcription initiation by RNA polymerase II (PubMed:20144761). Required for proper expression of ecdysone-responsive genes such as Eip74EF and Eip75B during larval development (PubMed:20144761). Required for reactivation of transcription after heat shock (PubMed:20144761). Required for nuclear import of phosphorylated Mad via importin msk (PubMed:20547758). Has no role in classical nuclear localization signal (cNLS)-dependent nuclear import via importin-beta (PubMed:20547758).</text>
</comment>
<comment type="function">
    <text evidence="6">A component of the GATOR subcomplex GATOR2 which functions as an activator of the amino acid-sensing branch of the mTORC1 signaling pathway (PubMed:27166823). The two GATOR subcomplexes, GATOR1 and GATOR2, regulate the mTORC1 pathway in order to mediate metabolic homeostasis, female gametogenesis and the response to amino acid limitation and complete starvation (PubMed:27166823). GATOR2 activates the mTORC1 signaling pathway through the inhibition of the GATOR1 subcomplex, controlling the switch to cell proliferation and growth under nutrient replete conditions and during female oocyte development (PubMed:27166823).</text>
</comment>
<comment type="subunit">
    <text evidence="1 5 6 7">Probable component of the nuclear pore complex (NPC) (By similarity). Component of the GATOR complex consisting of mio, Nup44A/Seh1, Im11, Nplr3, Nplr2, Wdr24, Wdr59 and Sec13 (PubMed:27166823). Within the GATOR complex, probable component of the GATOR2 subcomplex which is likely composed of mio, Nup44A/Seh1, Wdr24, Wdr59 and Sec13 (PubMed:27166823). Interacts with msk (PubMed:20547758). Interacts (preferentially when phosphorylated) with Mad (PubMed:20547758). The GATOR2 complex associates with unmet in the absence of S-adenosyl-L-methionine; the mio-Wdr24-Nup44A subcomplex is essential and sufficient for this interaction while Wdr59 and Sec13 are dispensable (PubMed:38514639). This association acts as a nutrient sensor to inhibit mTORC1 signaling in the absence of methionine (PubMed:38514639).</text>
</comment>
<comment type="interaction">
    <interactant intactId="EBI-169056">
        <id>Q9V3J4</id>
    </interactant>
    <interactant intactId="EBI-9964542">
        <id>Q8MRL2</id>
        <label>SP160</label>
    </interactant>
    <organismsDiffer>false</organismsDiffer>
    <experiments>4</experiments>
</comment>
<comment type="subcellular location">
    <subcellularLocation>
        <location evidence="4">Nucleus envelope</location>
    </subcellularLocation>
    <subcellularLocation>
        <location evidence="4">Nucleus</location>
        <location evidence="4">Nucleoplasm</location>
    </subcellularLocation>
    <subcellularLocation>
        <location evidence="4">Cytoplasm</location>
        <location evidence="4">Cytoskeleton</location>
        <location evidence="4">Microtubule organizing center</location>
        <location evidence="4">Centrosome</location>
    </subcellularLocation>
    <subcellularLocation>
        <location evidence="4">Nucleus</location>
        <location evidence="4">Nuclear pore complex</location>
    </subcellularLocation>
    <subcellularLocation>
        <location>Cytoplasmic vesicle</location>
        <location>COPII-coated vesicle membrane</location>
        <topology>Peripheral membrane protein</topology>
        <orientation evidence="1">Cytoplasmic side</orientation>
    </subcellularLocation>
    <subcellularLocation>
        <location>Endoplasmic reticulum membrane</location>
        <topology>Peripheral membrane protein</topology>
        <orientation evidence="1">Cytoplasmic side</orientation>
    </subcellularLocation>
    <subcellularLocation>
        <location evidence="9">Lysosome membrane</location>
    </subcellularLocation>
    <text>Localizes to chromatin, specifically to areas undergoing transcriptional activation. Chromatin localization is independent of the nuclear pore complex (PubMed:20144761).</text>
</comment>
<comment type="tissue specificity">
    <text evidence="4">Salivary glands.</text>
</comment>
<comment type="developmental stage">
    <text evidence="4">Expressed during larval development.</text>
</comment>
<comment type="disruption phenotype">
    <text evidence="4">RNAi-mediated knockdown in the larva results in reduced transcription of developmental genes Eip74EF and Eip75B in the salivary glands, compromised transcriptional recovery after heat shock and defective recruitment of Nup98.</text>
</comment>
<comment type="similarity">
    <text evidence="8">Belongs to the WD repeat SEC13 family.</text>
</comment>
<comment type="sequence caution" evidence="8">
    <conflict type="erroneous initiation">
        <sequence resource="EMBL-CDS" id="AAD46849"/>
    </conflict>
    <text>Extended N-terminus.</text>
</comment>
<protein>
    <recommendedName>
        <fullName evidence="8">Protein SEC13 homolog</fullName>
    </recommendedName>
    <alternativeName>
        <fullName evidence="8">GATOR complex protein SEC13</fullName>
    </alternativeName>
    <alternativeName>
        <fullName evidence="12">Secretory protein 13</fullName>
    </alternativeName>
</protein>
<proteinExistence type="evidence at protein level"/>